<dbReference type="EC" id="3.5.1.18" evidence="1"/>
<dbReference type="EMBL" id="BA000021">
    <property type="protein sequence ID" value="BAC24428.1"/>
    <property type="molecule type" value="Genomic_DNA"/>
</dbReference>
<dbReference type="SMR" id="Q8D2S2"/>
<dbReference type="STRING" id="36870.gene:10368775"/>
<dbReference type="KEGG" id="wbr:dapE"/>
<dbReference type="eggNOG" id="COG0624">
    <property type="taxonomic scope" value="Bacteria"/>
</dbReference>
<dbReference type="HOGENOM" id="CLU_021802_4_0_6"/>
<dbReference type="OrthoDB" id="9809784at2"/>
<dbReference type="UniPathway" id="UPA00034">
    <property type="reaction ID" value="UER00021"/>
</dbReference>
<dbReference type="Proteomes" id="UP000000562">
    <property type="component" value="Chromosome"/>
</dbReference>
<dbReference type="GO" id="GO:0008777">
    <property type="term" value="F:acetylornithine deacetylase activity"/>
    <property type="evidence" value="ECO:0007669"/>
    <property type="project" value="TreeGrafter"/>
</dbReference>
<dbReference type="GO" id="GO:0050897">
    <property type="term" value="F:cobalt ion binding"/>
    <property type="evidence" value="ECO:0007669"/>
    <property type="project" value="UniProtKB-UniRule"/>
</dbReference>
<dbReference type="GO" id="GO:0009014">
    <property type="term" value="F:succinyl-diaminopimelate desuccinylase activity"/>
    <property type="evidence" value="ECO:0007669"/>
    <property type="project" value="UniProtKB-UniRule"/>
</dbReference>
<dbReference type="GO" id="GO:0008270">
    <property type="term" value="F:zinc ion binding"/>
    <property type="evidence" value="ECO:0007669"/>
    <property type="project" value="UniProtKB-UniRule"/>
</dbReference>
<dbReference type="GO" id="GO:0019877">
    <property type="term" value="P:diaminopimelate biosynthetic process"/>
    <property type="evidence" value="ECO:0007669"/>
    <property type="project" value="UniProtKB-UniRule"/>
</dbReference>
<dbReference type="GO" id="GO:0006526">
    <property type="term" value="P:L-arginine biosynthetic process"/>
    <property type="evidence" value="ECO:0007669"/>
    <property type="project" value="TreeGrafter"/>
</dbReference>
<dbReference type="GO" id="GO:0009089">
    <property type="term" value="P:lysine biosynthetic process via diaminopimelate"/>
    <property type="evidence" value="ECO:0007669"/>
    <property type="project" value="UniProtKB-UniRule"/>
</dbReference>
<dbReference type="CDD" id="cd03891">
    <property type="entry name" value="M20_DapE_proteobac"/>
    <property type="match status" value="1"/>
</dbReference>
<dbReference type="Gene3D" id="3.40.630.10">
    <property type="entry name" value="Zn peptidases"/>
    <property type="match status" value="2"/>
</dbReference>
<dbReference type="HAMAP" id="MF_01690">
    <property type="entry name" value="DapE"/>
    <property type="match status" value="1"/>
</dbReference>
<dbReference type="InterPro" id="IPR001261">
    <property type="entry name" value="ArgE/DapE_CS"/>
</dbReference>
<dbReference type="InterPro" id="IPR036264">
    <property type="entry name" value="Bact_exopeptidase_dim_dom"/>
</dbReference>
<dbReference type="InterPro" id="IPR005941">
    <property type="entry name" value="DapE_proteobac"/>
</dbReference>
<dbReference type="InterPro" id="IPR002933">
    <property type="entry name" value="Peptidase_M20"/>
</dbReference>
<dbReference type="InterPro" id="IPR011650">
    <property type="entry name" value="Peptidase_M20_dimer"/>
</dbReference>
<dbReference type="InterPro" id="IPR050072">
    <property type="entry name" value="Peptidase_M20A"/>
</dbReference>
<dbReference type="NCBIfam" id="TIGR01246">
    <property type="entry name" value="dapE_proteo"/>
    <property type="match status" value="1"/>
</dbReference>
<dbReference type="NCBIfam" id="NF009557">
    <property type="entry name" value="PRK13009.1"/>
    <property type="match status" value="1"/>
</dbReference>
<dbReference type="PANTHER" id="PTHR43808">
    <property type="entry name" value="ACETYLORNITHINE DEACETYLASE"/>
    <property type="match status" value="1"/>
</dbReference>
<dbReference type="PANTHER" id="PTHR43808:SF31">
    <property type="entry name" value="N-ACETYL-L-CITRULLINE DEACETYLASE"/>
    <property type="match status" value="1"/>
</dbReference>
<dbReference type="Pfam" id="PF07687">
    <property type="entry name" value="M20_dimer"/>
    <property type="match status" value="1"/>
</dbReference>
<dbReference type="Pfam" id="PF01546">
    <property type="entry name" value="Peptidase_M20"/>
    <property type="match status" value="1"/>
</dbReference>
<dbReference type="SUPFAM" id="SSF55031">
    <property type="entry name" value="Bacterial exopeptidase dimerisation domain"/>
    <property type="match status" value="1"/>
</dbReference>
<dbReference type="SUPFAM" id="SSF53187">
    <property type="entry name" value="Zn-dependent exopeptidases"/>
    <property type="match status" value="1"/>
</dbReference>
<dbReference type="PROSITE" id="PS00758">
    <property type="entry name" value="ARGE_DAPE_CPG2_1"/>
    <property type="match status" value="1"/>
</dbReference>
<dbReference type="PROSITE" id="PS00759">
    <property type="entry name" value="ARGE_DAPE_CPG2_2"/>
    <property type="match status" value="1"/>
</dbReference>
<reference key="1">
    <citation type="journal article" date="2002" name="Nat. Genet.">
        <title>Genome sequence of the endocellular obligate symbiont of tsetse flies, Wigglesworthia glossinidia.</title>
        <authorList>
            <person name="Akman L."/>
            <person name="Yamashita A."/>
            <person name="Watanabe H."/>
            <person name="Oshima K."/>
            <person name="Shiba T."/>
            <person name="Hattori M."/>
            <person name="Aksoy S."/>
        </authorList>
    </citation>
    <scope>NUCLEOTIDE SEQUENCE [LARGE SCALE GENOMIC DNA]</scope>
</reference>
<evidence type="ECO:0000255" key="1">
    <source>
        <dbReference type="HAMAP-Rule" id="MF_01690"/>
    </source>
</evidence>
<name>DAPE_WIGBR</name>
<keyword id="KW-0028">Amino-acid biosynthesis</keyword>
<keyword id="KW-0170">Cobalt</keyword>
<keyword id="KW-0220">Diaminopimelate biosynthesis</keyword>
<keyword id="KW-0378">Hydrolase</keyword>
<keyword id="KW-0457">Lysine biosynthesis</keyword>
<keyword id="KW-0479">Metal-binding</keyword>
<keyword id="KW-1185">Reference proteome</keyword>
<keyword id="KW-0862">Zinc</keyword>
<sequence length="376" mass="42588">MNIVEIAKNLIKCQSLSPYDAGCNKIIIKCLHNMGFYVEKMKFGKTENIWAYKGTGYTLLFAGHTDVVHAGNVKNWKYPPFSSKLKDGILYGRGSADMKGALAAMLIAAKKFFKSYKEPKGRLAFLITSDEEGSGSNGTKKVINVLLKRKEKIDCCLIGEPTGEKNIGDIVKNGRRGSLSVKIIIYGKQNHVAYAENNNNPIYHSNKIIGELLKTSWNDVQCILPKTTMQIIGIRSNIKKFTNITPSKVEIIINFRFNFKSNKKIIKEKIVSILKKYKYFYDIKCILHSDPFFTKTGNLLKSVIESVKIYQKITPCIINSGGTSDGRFIYKISKQIIELGLLNKTIHKDNEHIKVKDLLILCNIYQYILKKILIKN</sequence>
<accession>Q8D2S2</accession>
<organism>
    <name type="scientific">Wigglesworthia glossinidia brevipalpis</name>
    <dbReference type="NCBI Taxonomy" id="36870"/>
    <lineage>
        <taxon>Bacteria</taxon>
        <taxon>Pseudomonadati</taxon>
        <taxon>Pseudomonadota</taxon>
        <taxon>Gammaproteobacteria</taxon>
        <taxon>Enterobacterales</taxon>
        <taxon>Erwiniaceae</taxon>
        <taxon>Wigglesworthia</taxon>
    </lineage>
</organism>
<comment type="function">
    <text evidence="1">Catalyzes the hydrolysis of N-succinyl-L,L-diaminopimelic acid (SDAP), forming succinate and LL-2,6-diaminopimelate (DAP), an intermediate involved in the bacterial biosynthesis of lysine and meso-diaminopimelic acid, an essential component of bacterial cell walls.</text>
</comment>
<comment type="catalytic activity">
    <reaction evidence="1">
        <text>N-succinyl-(2S,6S)-2,6-diaminopimelate + H2O = (2S,6S)-2,6-diaminopimelate + succinate</text>
        <dbReference type="Rhea" id="RHEA:22608"/>
        <dbReference type="ChEBI" id="CHEBI:15377"/>
        <dbReference type="ChEBI" id="CHEBI:30031"/>
        <dbReference type="ChEBI" id="CHEBI:57609"/>
        <dbReference type="ChEBI" id="CHEBI:58087"/>
        <dbReference type="EC" id="3.5.1.18"/>
    </reaction>
</comment>
<comment type="cofactor">
    <cofactor evidence="1">
        <name>Zn(2+)</name>
        <dbReference type="ChEBI" id="CHEBI:29105"/>
    </cofactor>
    <cofactor evidence="1">
        <name>Co(2+)</name>
        <dbReference type="ChEBI" id="CHEBI:48828"/>
    </cofactor>
    <text evidence="1">Binds 2 Zn(2+) or Co(2+) ions per subunit.</text>
</comment>
<comment type="pathway">
    <text evidence="1">Amino-acid biosynthesis; L-lysine biosynthesis via DAP pathway; LL-2,6-diaminopimelate from (S)-tetrahydrodipicolinate (succinylase route): step 3/3.</text>
</comment>
<comment type="subunit">
    <text evidence="1">Homodimer.</text>
</comment>
<comment type="similarity">
    <text evidence="1">Belongs to the peptidase M20A family. DapE subfamily.</text>
</comment>
<proteinExistence type="inferred from homology"/>
<gene>
    <name evidence="1" type="primary">dapE</name>
    <name type="ordered locus">WIGBR2820</name>
</gene>
<feature type="chain" id="PRO_0000375775" description="Succinyl-diaminopimelate desuccinylase">
    <location>
        <begin position="1"/>
        <end position="376"/>
    </location>
</feature>
<feature type="active site" evidence="1">
    <location>
        <position position="66"/>
    </location>
</feature>
<feature type="active site" description="Proton acceptor" evidence="1">
    <location>
        <position position="131"/>
    </location>
</feature>
<feature type="binding site" evidence="1">
    <location>
        <position position="64"/>
    </location>
    <ligand>
        <name>Zn(2+)</name>
        <dbReference type="ChEBI" id="CHEBI:29105"/>
        <label>1</label>
    </ligand>
</feature>
<feature type="binding site" evidence="1">
    <location>
        <position position="97"/>
    </location>
    <ligand>
        <name>Zn(2+)</name>
        <dbReference type="ChEBI" id="CHEBI:29105"/>
        <label>1</label>
    </ligand>
</feature>
<feature type="binding site" evidence="1">
    <location>
        <position position="97"/>
    </location>
    <ligand>
        <name>Zn(2+)</name>
        <dbReference type="ChEBI" id="CHEBI:29105"/>
        <label>2</label>
    </ligand>
</feature>
<feature type="binding site" evidence="1">
    <location>
        <position position="132"/>
    </location>
    <ligand>
        <name>Zn(2+)</name>
        <dbReference type="ChEBI" id="CHEBI:29105"/>
        <label>2</label>
    </ligand>
</feature>
<feature type="binding site" evidence="1">
    <location>
        <position position="160"/>
    </location>
    <ligand>
        <name>Zn(2+)</name>
        <dbReference type="ChEBI" id="CHEBI:29105"/>
        <label>1</label>
    </ligand>
</feature>
<feature type="binding site" evidence="1">
    <location>
        <position position="347"/>
    </location>
    <ligand>
        <name>Zn(2+)</name>
        <dbReference type="ChEBI" id="CHEBI:29105"/>
        <label>2</label>
    </ligand>
</feature>
<protein>
    <recommendedName>
        <fullName evidence="1">Succinyl-diaminopimelate desuccinylase</fullName>
        <shortName evidence="1">SDAP desuccinylase</shortName>
        <ecNumber evidence="1">3.5.1.18</ecNumber>
    </recommendedName>
    <alternativeName>
        <fullName evidence="1">N-succinyl-LL-2,6-diaminoheptanedioate amidohydrolase</fullName>
    </alternativeName>
</protein>